<comment type="function">
    <text evidence="1">A type II topoisomerase that negatively supercoils closed circular double-stranded (ds) DNA in an ATP-dependent manner to modulate DNA topology and maintain chromosomes in an underwound state. Negative supercoiling favors strand separation, and DNA replication, transcription, recombination and repair, all of which involve strand separation. Also able to catalyze the interconversion of other topological isomers of dsDNA rings, including catenanes and knotted rings. Type II topoisomerases break and join 2 DNA strands simultaneously in an ATP-dependent manner.</text>
</comment>
<comment type="catalytic activity">
    <reaction evidence="2">
        <text>ATP-dependent breakage, passage and rejoining of double-stranded DNA.</text>
        <dbReference type="EC" id="5.6.2.2"/>
    </reaction>
</comment>
<comment type="subunit">
    <text evidence="1">Heterotetramer, composed of two GyrA and two GyrB chains. In the heterotetramer, GyrA contains the active site tyrosine that forms a transient covalent intermediate with DNA, while GyrB binds cofactors and catalyzes ATP hydrolysis.</text>
</comment>
<comment type="subcellular location">
    <subcellularLocation>
        <location evidence="1">Cytoplasm</location>
    </subcellularLocation>
</comment>
<comment type="miscellaneous">
    <text evidence="1">Few gyrases are as efficient as E.coli at forming negative supercoils. Not all organisms have 2 type II topoisomerases; in organisms with a single type II topoisomerase this enzyme also has to decatenate newly replicated chromosomes.</text>
</comment>
<comment type="similarity">
    <text evidence="3">Belongs to the type II topoisomerase GyrB family.</text>
</comment>
<evidence type="ECO:0000250" key="1">
    <source>
        <dbReference type="UniProtKB" id="P0AES6"/>
    </source>
</evidence>
<evidence type="ECO:0000255" key="2">
    <source>
        <dbReference type="PROSITE-ProRule" id="PRU00995"/>
    </source>
</evidence>
<evidence type="ECO:0000305" key="3"/>
<reference key="1">
    <citation type="journal article" date="1999" name="Int. J. Syst. Bacteriol.">
        <title>Phylogenetic structures of the genus Acinetobacter based on gyrB sequences: comparison with the grouping by DNA-DNA hybridization.</title>
        <authorList>
            <person name="Yamamoto S."/>
            <person name="Bouvet P.J.M."/>
            <person name="Harayama S."/>
        </authorList>
    </citation>
    <scope>NUCLEOTIDE SEQUENCE [GENOMIC DNA]</scope>
    <source>
        <strain>ATCC 19004 / DSM 25618 / CCUG 61664 / LMG 1035 / CIP 70.29</strain>
    </source>
</reference>
<reference key="2">
    <citation type="journal article" date="1996" name="Int. J. Syst. Bacteriol.">
        <title>Phylogenetic analysis of Acinetobacter strains based on the nucleotide sequences of gyrB genes and on the amino acid sequences of their products.</title>
        <authorList>
            <person name="Yamamoto S."/>
            <person name="Harayama S."/>
        </authorList>
    </citation>
    <scope>NUCLEOTIDE SEQUENCE [GENOMIC DNA] OF 3-118 AND 289-388</scope>
</reference>
<gene>
    <name type="primary">gyrB</name>
</gene>
<dbReference type="EC" id="5.6.2.2" evidence="2"/>
<dbReference type="EMBL" id="AB008686">
    <property type="protein sequence ID" value="BAA75403.1"/>
    <property type="molecule type" value="Genomic_DNA"/>
</dbReference>
<dbReference type="EMBL" id="D73429">
    <property type="protein sequence ID" value="BAA11154.1"/>
    <property type="molecule type" value="Genomic_DNA"/>
</dbReference>
<dbReference type="EMBL" id="D73414">
    <property type="protein sequence ID" value="BAA11139.1"/>
    <property type="molecule type" value="Genomic_DNA"/>
</dbReference>
<dbReference type="SMR" id="Q44270"/>
<dbReference type="GO" id="GO:0005737">
    <property type="term" value="C:cytoplasm"/>
    <property type="evidence" value="ECO:0007669"/>
    <property type="project" value="UniProtKB-SubCell"/>
</dbReference>
<dbReference type="GO" id="GO:0005524">
    <property type="term" value="F:ATP binding"/>
    <property type="evidence" value="ECO:0007669"/>
    <property type="project" value="UniProtKB-KW"/>
</dbReference>
<dbReference type="GO" id="GO:0003677">
    <property type="term" value="F:DNA binding"/>
    <property type="evidence" value="ECO:0007669"/>
    <property type="project" value="UniProtKB-KW"/>
</dbReference>
<dbReference type="GO" id="GO:0003918">
    <property type="term" value="F:DNA topoisomerase type II (double strand cut, ATP-hydrolyzing) activity"/>
    <property type="evidence" value="ECO:0007669"/>
    <property type="project" value="UniProtKB-EC"/>
</dbReference>
<dbReference type="GO" id="GO:0006265">
    <property type="term" value="P:DNA topological change"/>
    <property type="evidence" value="ECO:0007669"/>
    <property type="project" value="InterPro"/>
</dbReference>
<dbReference type="CDD" id="cd00822">
    <property type="entry name" value="TopoII_Trans_DNA_gyrase"/>
    <property type="match status" value="1"/>
</dbReference>
<dbReference type="FunFam" id="3.30.230.10:FF:000005">
    <property type="entry name" value="DNA gyrase subunit B"/>
    <property type="match status" value="1"/>
</dbReference>
<dbReference type="Gene3D" id="3.30.230.10">
    <property type="match status" value="1"/>
</dbReference>
<dbReference type="Gene3D" id="3.40.50.670">
    <property type="match status" value="1"/>
</dbReference>
<dbReference type="Gene3D" id="3.30.565.10">
    <property type="entry name" value="Histidine kinase-like ATPase, C-terminal domain"/>
    <property type="match status" value="1"/>
</dbReference>
<dbReference type="InterPro" id="IPR036890">
    <property type="entry name" value="HATPase_C_sf"/>
</dbReference>
<dbReference type="InterPro" id="IPR020568">
    <property type="entry name" value="Ribosomal_Su5_D2-typ_SF"/>
</dbReference>
<dbReference type="InterPro" id="IPR014721">
    <property type="entry name" value="Ribsml_uS5_D2-typ_fold_subgr"/>
</dbReference>
<dbReference type="InterPro" id="IPR001241">
    <property type="entry name" value="Topo_IIA"/>
</dbReference>
<dbReference type="InterPro" id="IPR013760">
    <property type="entry name" value="Topo_IIA-like_dom_sf"/>
</dbReference>
<dbReference type="InterPro" id="IPR000565">
    <property type="entry name" value="Topo_IIA_B"/>
</dbReference>
<dbReference type="InterPro" id="IPR013759">
    <property type="entry name" value="Topo_IIA_B_C"/>
</dbReference>
<dbReference type="InterPro" id="IPR013506">
    <property type="entry name" value="Topo_IIA_bsu_dom2"/>
</dbReference>
<dbReference type="InterPro" id="IPR018522">
    <property type="entry name" value="TopoIIA_CS"/>
</dbReference>
<dbReference type="InterPro" id="IPR006171">
    <property type="entry name" value="TOPRIM_dom"/>
</dbReference>
<dbReference type="PANTHER" id="PTHR45866:SF1">
    <property type="entry name" value="DNA GYRASE SUBUNIT B, MITOCHONDRIAL"/>
    <property type="match status" value="1"/>
</dbReference>
<dbReference type="PANTHER" id="PTHR45866">
    <property type="entry name" value="DNA GYRASE/TOPOISOMERASE SUBUNIT B"/>
    <property type="match status" value="1"/>
</dbReference>
<dbReference type="Pfam" id="PF00204">
    <property type="entry name" value="DNA_gyraseB"/>
    <property type="match status" value="1"/>
</dbReference>
<dbReference type="Pfam" id="PF01751">
    <property type="entry name" value="Toprim"/>
    <property type="match status" value="1"/>
</dbReference>
<dbReference type="PRINTS" id="PR01159">
    <property type="entry name" value="DNAGYRASEB"/>
</dbReference>
<dbReference type="PRINTS" id="PR00418">
    <property type="entry name" value="TPI2FAMILY"/>
</dbReference>
<dbReference type="SMART" id="SM00433">
    <property type="entry name" value="TOP2c"/>
    <property type="match status" value="1"/>
</dbReference>
<dbReference type="SUPFAM" id="SSF55874">
    <property type="entry name" value="ATPase domain of HSP90 chaperone/DNA topoisomerase II/histidine kinase"/>
    <property type="match status" value="1"/>
</dbReference>
<dbReference type="SUPFAM" id="SSF54211">
    <property type="entry name" value="Ribosomal protein S5 domain 2-like"/>
    <property type="match status" value="1"/>
</dbReference>
<dbReference type="SUPFAM" id="SSF56719">
    <property type="entry name" value="Type II DNA topoisomerase"/>
    <property type="match status" value="1"/>
</dbReference>
<dbReference type="PROSITE" id="PS00177">
    <property type="entry name" value="TOPOISOMERASE_II"/>
    <property type="match status" value="1"/>
</dbReference>
<dbReference type="PROSITE" id="PS50880">
    <property type="entry name" value="TOPRIM"/>
    <property type="match status" value="1"/>
</dbReference>
<accession>Q44270</accession>
<accession>Q60168</accession>
<accession>Q9ZA08</accession>
<keyword id="KW-0067">ATP-binding</keyword>
<keyword id="KW-0963">Cytoplasm</keyword>
<keyword id="KW-0238">DNA-binding</keyword>
<keyword id="KW-0413">Isomerase</keyword>
<keyword id="KW-0547">Nucleotide-binding</keyword>
<keyword id="KW-0799">Topoisomerase</keyword>
<organism>
    <name type="scientific">Acinetobacter pittii</name>
    <name type="common">Acinetobacter genomosp. 3</name>
    <dbReference type="NCBI Taxonomy" id="48296"/>
    <lineage>
        <taxon>Bacteria</taxon>
        <taxon>Pseudomonadati</taxon>
        <taxon>Pseudomonadota</taxon>
        <taxon>Gammaproteobacteria</taxon>
        <taxon>Moraxellales</taxon>
        <taxon>Moraxellaceae</taxon>
        <taxon>Acinetobacter</taxon>
        <taxon>Acinetobacter calcoaceticus/baumannii complex</taxon>
    </lineage>
</organism>
<proteinExistence type="inferred from homology"/>
<name>GYRB_ACIPI</name>
<sequence>DNSYKVSGGLHGVGVSVVNALSSKLHLIINRAGQVHEQEYHHGDPQYPLRVIGETDSSGTTVRFWPSELTFSQTIFNVEILARRLRELSFLNAGVRIVLRDERINLEHVYDYEGGLSEFVKYINEGKTHLNEIFHFTADTENGIGVEVALQWNESYQENVRCFTNNIPQKDGGTHLAGFRAALTRGLNQYLENENILKKEKVNVTGDDAREGLTAIISVKVPDPKFSSQTKEKLVSSEVKPAVEQAMNKEFSAYLLENPQAAKSIAGKIIDAARARDAARKAREMTRRKSALDIAGLPGKLADCQEKDPALSELYLVEGDSAGGSAKQGRNRKMQAILPLKGKILNVERARFDKMISSQEVGTLITALGCGIGREEYNPDKLRYHKII</sequence>
<protein>
    <recommendedName>
        <fullName>DNA gyrase subunit B</fullName>
        <ecNumber evidence="2">5.6.2.2</ecNumber>
    </recommendedName>
</protein>
<feature type="chain" id="PRO_0000145280" description="DNA gyrase subunit B">
    <location>
        <begin position="1" status="less than"/>
        <end position="388" status="greater than"/>
    </location>
</feature>
<feature type="domain" description="Toprim" evidence="2">
    <location>
        <begin position="312"/>
        <end position="388" status="greater than"/>
    </location>
</feature>
<feature type="site" description="Interaction with DNA" evidence="2">
    <location>
        <position position="343"/>
    </location>
</feature>
<feature type="site" description="Interaction with DNA" evidence="2">
    <location>
        <position position="346"/>
    </location>
</feature>
<feature type="non-terminal residue">
    <location>
        <position position="1"/>
    </location>
</feature>
<feature type="non-terminal residue">
    <location>
        <position position="388"/>
    </location>
</feature>